<gene>
    <name evidence="1" type="primary">accD1</name>
    <name type="ordered locus">JDM1_0533</name>
</gene>
<comment type="function">
    <text evidence="1">Component of the acetyl coenzyme A carboxylase (ACC) complex. Biotin carboxylase (BC) catalyzes the carboxylation of biotin on its carrier protein (BCCP) and then the CO(2) group is transferred by the transcarboxylase to acetyl-CoA to form malonyl-CoA.</text>
</comment>
<comment type="catalytic activity">
    <reaction evidence="1">
        <text>N(6)-carboxybiotinyl-L-lysyl-[protein] + acetyl-CoA = N(6)-biotinyl-L-lysyl-[protein] + malonyl-CoA</text>
        <dbReference type="Rhea" id="RHEA:54728"/>
        <dbReference type="Rhea" id="RHEA-COMP:10505"/>
        <dbReference type="Rhea" id="RHEA-COMP:10506"/>
        <dbReference type="ChEBI" id="CHEBI:57288"/>
        <dbReference type="ChEBI" id="CHEBI:57384"/>
        <dbReference type="ChEBI" id="CHEBI:83144"/>
        <dbReference type="ChEBI" id="CHEBI:83145"/>
        <dbReference type="EC" id="2.1.3.15"/>
    </reaction>
</comment>
<comment type="cofactor">
    <cofactor evidence="1">
        <name>Zn(2+)</name>
        <dbReference type="ChEBI" id="CHEBI:29105"/>
    </cofactor>
    <text evidence="1">Binds 1 zinc ion per subunit.</text>
</comment>
<comment type="pathway">
    <text evidence="1">Lipid metabolism; malonyl-CoA biosynthesis; malonyl-CoA from acetyl-CoA: step 1/1.</text>
</comment>
<comment type="subunit">
    <text evidence="1">Acetyl-CoA carboxylase is a heterohexamer composed of biotin carboxyl carrier protein (AccB), biotin carboxylase (AccC) and two subunits each of ACCase subunit alpha (AccA) and ACCase subunit beta (AccD).</text>
</comment>
<comment type="subcellular location">
    <subcellularLocation>
        <location evidence="1">Cytoplasm</location>
    </subcellularLocation>
</comment>
<comment type="similarity">
    <text evidence="1">Belongs to the AccD/PCCB family.</text>
</comment>
<organism>
    <name type="scientific">Lactiplantibacillus plantarum (strain JDM1)</name>
    <name type="common">Lactobacillus plantarum</name>
    <dbReference type="NCBI Taxonomy" id="644042"/>
    <lineage>
        <taxon>Bacteria</taxon>
        <taxon>Bacillati</taxon>
        <taxon>Bacillota</taxon>
        <taxon>Bacilli</taxon>
        <taxon>Lactobacillales</taxon>
        <taxon>Lactobacillaceae</taxon>
        <taxon>Lactiplantibacillus</taxon>
    </lineage>
</organism>
<keyword id="KW-0067">ATP-binding</keyword>
<keyword id="KW-0963">Cytoplasm</keyword>
<keyword id="KW-0275">Fatty acid biosynthesis</keyword>
<keyword id="KW-0276">Fatty acid metabolism</keyword>
<keyword id="KW-0444">Lipid biosynthesis</keyword>
<keyword id="KW-0443">Lipid metabolism</keyword>
<keyword id="KW-0479">Metal-binding</keyword>
<keyword id="KW-0547">Nucleotide-binding</keyword>
<keyword id="KW-0808">Transferase</keyword>
<keyword id="KW-0862">Zinc</keyword>
<keyword id="KW-0863">Zinc-finger</keyword>
<accession>C6VLJ0</accession>
<protein>
    <recommendedName>
        <fullName evidence="1">Acetyl-coenzyme A carboxylase carboxyl transferase subunit beta 1</fullName>
        <shortName evidence="1">ACCase subunit beta 1</shortName>
        <shortName evidence="1">Acetyl-CoA carboxylase carboxyltransferase subunit beta 1</shortName>
        <ecNumber evidence="1">2.1.3.15</ecNumber>
    </recommendedName>
</protein>
<evidence type="ECO:0000255" key="1">
    <source>
        <dbReference type="HAMAP-Rule" id="MF_01395"/>
    </source>
</evidence>
<evidence type="ECO:0000255" key="2">
    <source>
        <dbReference type="PROSITE-ProRule" id="PRU01136"/>
    </source>
</evidence>
<dbReference type="EC" id="2.1.3.15" evidence="1"/>
<dbReference type="EMBL" id="CP001617">
    <property type="protein sequence ID" value="ACT61422.1"/>
    <property type="molecule type" value="Genomic_DNA"/>
</dbReference>
<dbReference type="RefSeq" id="WP_015379848.1">
    <property type="nucleotide sequence ID" value="NC_012984.1"/>
</dbReference>
<dbReference type="SMR" id="C6VLJ0"/>
<dbReference type="KEGG" id="lpj:JDM1_0533"/>
<dbReference type="HOGENOM" id="CLU_015486_1_1_9"/>
<dbReference type="UniPathway" id="UPA00655">
    <property type="reaction ID" value="UER00711"/>
</dbReference>
<dbReference type="GO" id="GO:0009317">
    <property type="term" value="C:acetyl-CoA carboxylase complex"/>
    <property type="evidence" value="ECO:0007669"/>
    <property type="project" value="InterPro"/>
</dbReference>
<dbReference type="GO" id="GO:0003989">
    <property type="term" value="F:acetyl-CoA carboxylase activity"/>
    <property type="evidence" value="ECO:0007669"/>
    <property type="project" value="InterPro"/>
</dbReference>
<dbReference type="GO" id="GO:0005524">
    <property type="term" value="F:ATP binding"/>
    <property type="evidence" value="ECO:0007669"/>
    <property type="project" value="UniProtKB-KW"/>
</dbReference>
<dbReference type="GO" id="GO:0016743">
    <property type="term" value="F:carboxyl- or carbamoyltransferase activity"/>
    <property type="evidence" value="ECO:0007669"/>
    <property type="project" value="UniProtKB-UniRule"/>
</dbReference>
<dbReference type="GO" id="GO:0008270">
    <property type="term" value="F:zinc ion binding"/>
    <property type="evidence" value="ECO:0007669"/>
    <property type="project" value="UniProtKB-UniRule"/>
</dbReference>
<dbReference type="GO" id="GO:0006633">
    <property type="term" value="P:fatty acid biosynthetic process"/>
    <property type="evidence" value="ECO:0007669"/>
    <property type="project" value="UniProtKB-KW"/>
</dbReference>
<dbReference type="GO" id="GO:2001295">
    <property type="term" value="P:malonyl-CoA biosynthetic process"/>
    <property type="evidence" value="ECO:0007669"/>
    <property type="project" value="UniProtKB-UniRule"/>
</dbReference>
<dbReference type="Gene3D" id="3.90.226.10">
    <property type="entry name" value="2-enoyl-CoA Hydratase, Chain A, domain 1"/>
    <property type="match status" value="1"/>
</dbReference>
<dbReference type="HAMAP" id="MF_01395">
    <property type="entry name" value="AcetylCoA_CT_beta"/>
    <property type="match status" value="1"/>
</dbReference>
<dbReference type="InterPro" id="IPR034733">
    <property type="entry name" value="AcCoA_carboxyl_beta"/>
</dbReference>
<dbReference type="InterPro" id="IPR000438">
    <property type="entry name" value="Acetyl_CoA_COase_Trfase_b_su"/>
</dbReference>
<dbReference type="InterPro" id="IPR029045">
    <property type="entry name" value="ClpP/crotonase-like_dom_sf"/>
</dbReference>
<dbReference type="InterPro" id="IPR011762">
    <property type="entry name" value="COA_CT_N"/>
</dbReference>
<dbReference type="PANTHER" id="PTHR42995">
    <property type="entry name" value="ACETYL-COENZYME A CARBOXYLASE CARBOXYL TRANSFERASE SUBUNIT BETA, CHLOROPLASTIC"/>
    <property type="match status" value="1"/>
</dbReference>
<dbReference type="PANTHER" id="PTHR42995:SF5">
    <property type="entry name" value="ACETYL-COENZYME A CARBOXYLASE CARBOXYL TRANSFERASE SUBUNIT BETA, CHLOROPLASTIC"/>
    <property type="match status" value="1"/>
</dbReference>
<dbReference type="Pfam" id="PF01039">
    <property type="entry name" value="Carboxyl_trans"/>
    <property type="match status" value="1"/>
</dbReference>
<dbReference type="PRINTS" id="PR01070">
    <property type="entry name" value="ACCCTRFRASEB"/>
</dbReference>
<dbReference type="SUPFAM" id="SSF52096">
    <property type="entry name" value="ClpP/crotonase"/>
    <property type="match status" value="1"/>
</dbReference>
<dbReference type="PROSITE" id="PS50980">
    <property type="entry name" value="COA_CT_NTER"/>
    <property type="match status" value="1"/>
</dbReference>
<reference key="1">
    <citation type="journal article" date="2009" name="J. Bacteriol.">
        <title>Complete genome sequence of Lactobacillus plantarum JDM1.</title>
        <authorList>
            <person name="Zhang Z.-Y."/>
            <person name="Liu C."/>
            <person name="Zhu Y.-Z."/>
            <person name="Zhong Y."/>
            <person name="Zhu Y.-Q."/>
            <person name="Zheng H.-J."/>
            <person name="Zhao G.-P."/>
            <person name="Wang S.-Y."/>
            <person name="Guo X.-K."/>
        </authorList>
    </citation>
    <scope>NUCLEOTIDE SEQUENCE [LARGE SCALE GENOMIC DNA]</scope>
    <source>
        <strain>JDM1</strain>
    </source>
</reference>
<feature type="chain" id="PRO_0000389770" description="Acetyl-coenzyme A carboxylase carboxyl transferase subunit beta 1">
    <location>
        <begin position="1"/>
        <end position="267"/>
    </location>
</feature>
<feature type="domain" description="CoA carboxyltransferase N-terminal" evidence="2">
    <location>
        <begin position="9"/>
        <end position="267"/>
    </location>
</feature>
<feature type="zinc finger region" description="C4-type" evidence="1">
    <location>
        <begin position="13"/>
        <end position="34"/>
    </location>
</feature>
<feature type="binding site" evidence="1">
    <location>
        <position position="13"/>
    </location>
    <ligand>
        <name>Zn(2+)</name>
        <dbReference type="ChEBI" id="CHEBI:29105"/>
    </ligand>
</feature>
<feature type="binding site" evidence="1">
    <location>
        <position position="16"/>
    </location>
    <ligand>
        <name>Zn(2+)</name>
        <dbReference type="ChEBI" id="CHEBI:29105"/>
    </ligand>
</feature>
<feature type="binding site" evidence="1">
    <location>
        <position position="31"/>
    </location>
    <ligand>
        <name>Zn(2+)</name>
        <dbReference type="ChEBI" id="CHEBI:29105"/>
    </ligand>
</feature>
<feature type="binding site" evidence="1">
    <location>
        <position position="34"/>
    </location>
    <ligand>
        <name>Zn(2+)</name>
        <dbReference type="ChEBI" id="CHEBI:29105"/>
    </ligand>
</feature>
<proteinExistence type="inferred from homology"/>
<sequence length="267" mass="29174">MSHYPASGTWQACPKCGRHVHQRQWGTYQQCPYCHYWQRLTTAQRLEQLVDEGSFQPLTMTERPVNQLGFPDYTNKLRRAQRQTGLNEAVVCGTALIEQQPCILAVMDSHFMMGTLNTAVTRRLLHASEQARAQRLPLIIVTASGGARMQEGVYALVGMNLILAELARLAATPLPLITVLTDPTMGGVSASFAFKGDLIIAEAGAKIGFAGARVIQQTLPVKLPADFQTADQLFKNGMVDAVVERPQLRSTLGQALANYGIGRSAHG</sequence>
<name>ACCD1_LACPJ</name>